<protein>
    <recommendedName>
        <fullName evidence="1">GTPase Era</fullName>
    </recommendedName>
</protein>
<accession>A9IIJ3</accession>
<name>ERA_BORPD</name>
<reference key="1">
    <citation type="journal article" date="2008" name="BMC Genomics">
        <title>The missing link: Bordetella petrii is endowed with both the metabolic versatility of environmental bacteria and virulence traits of pathogenic Bordetellae.</title>
        <authorList>
            <person name="Gross R."/>
            <person name="Guzman C.A."/>
            <person name="Sebaihia M."/>
            <person name="Martin dos Santos V.A.P."/>
            <person name="Pieper D.H."/>
            <person name="Koebnik R."/>
            <person name="Lechner M."/>
            <person name="Bartels D."/>
            <person name="Buhrmester J."/>
            <person name="Choudhuri J.V."/>
            <person name="Ebensen T."/>
            <person name="Gaigalat L."/>
            <person name="Herrmann S."/>
            <person name="Khachane A.N."/>
            <person name="Larisch C."/>
            <person name="Link S."/>
            <person name="Linke B."/>
            <person name="Meyer F."/>
            <person name="Mormann S."/>
            <person name="Nakunst D."/>
            <person name="Rueckert C."/>
            <person name="Schneiker-Bekel S."/>
            <person name="Schulze K."/>
            <person name="Voerholter F.-J."/>
            <person name="Yevsa T."/>
            <person name="Engle J.T."/>
            <person name="Goldman W.E."/>
            <person name="Puehler A."/>
            <person name="Goebel U.B."/>
            <person name="Goesmann A."/>
            <person name="Bloecker H."/>
            <person name="Kaiser O."/>
            <person name="Martinez-Arias R."/>
        </authorList>
    </citation>
    <scope>NUCLEOTIDE SEQUENCE [LARGE SCALE GENOMIC DNA]</scope>
    <source>
        <strain>ATCC BAA-461 / DSM 12804 / CCUG 43448</strain>
    </source>
</reference>
<dbReference type="EMBL" id="AM902716">
    <property type="protein sequence ID" value="CAP42104.1"/>
    <property type="molecule type" value="Genomic_DNA"/>
</dbReference>
<dbReference type="SMR" id="A9IIJ3"/>
<dbReference type="STRING" id="94624.Bpet1765"/>
<dbReference type="KEGG" id="bpt:Bpet1765"/>
<dbReference type="eggNOG" id="COG1159">
    <property type="taxonomic scope" value="Bacteria"/>
</dbReference>
<dbReference type="Proteomes" id="UP000001225">
    <property type="component" value="Chromosome"/>
</dbReference>
<dbReference type="GO" id="GO:0005829">
    <property type="term" value="C:cytosol"/>
    <property type="evidence" value="ECO:0007669"/>
    <property type="project" value="TreeGrafter"/>
</dbReference>
<dbReference type="GO" id="GO:0005886">
    <property type="term" value="C:plasma membrane"/>
    <property type="evidence" value="ECO:0007669"/>
    <property type="project" value="UniProtKB-SubCell"/>
</dbReference>
<dbReference type="GO" id="GO:0005525">
    <property type="term" value="F:GTP binding"/>
    <property type="evidence" value="ECO:0007669"/>
    <property type="project" value="UniProtKB-UniRule"/>
</dbReference>
<dbReference type="GO" id="GO:0003924">
    <property type="term" value="F:GTPase activity"/>
    <property type="evidence" value="ECO:0007669"/>
    <property type="project" value="UniProtKB-UniRule"/>
</dbReference>
<dbReference type="GO" id="GO:0043024">
    <property type="term" value="F:ribosomal small subunit binding"/>
    <property type="evidence" value="ECO:0007669"/>
    <property type="project" value="TreeGrafter"/>
</dbReference>
<dbReference type="GO" id="GO:0070181">
    <property type="term" value="F:small ribosomal subunit rRNA binding"/>
    <property type="evidence" value="ECO:0007669"/>
    <property type="project" value="UniProtKB-UniRule"/>
</dbReference>
<dbReference type="GO" id="GO:0000028">
    <property type="term" value="P:ribosomal small subunit assembly"/>
    <property type="evidence" value="ECO:0007669"/>
    <property type="project" value="TreeGrafter"/>
</dbReference>
<dbReference type="CDD" id="cd04163">
    <property type="entry name" value="Era"/>
    <property type="match status" value="1"/>
</dbReference>
<dbReference type="CDD" id="cd22534">
    <property type="entry name" value="KH-II_Era"/>
    <property type="match status" value="1"/>
</dbReference>
<dbReference type="Gene3D" id="3.30.300.20">
    <property type="match status" value="1"/>
</dbReference>
<dbReference type="Gene3D" id="3.40.50.300">
    <property type="entry name" value="P-loop containing nucleotide triphosphate hydrolases"/>
    <property type="match status" value="1"/>
</dbReference>
<dbReference type="HAMAP" id="MF_00367">
    <property type="entry name" value="GTPase_Era"/>
    <property type="match status" value="1"/>
</dbReference>
<dbReference type="InterPro" id="IPR030388">
    <property type="entry name" value="G_ERA_dom"/>
</dbReference>
<dbReference type="InterPro" id="IPR006073">
    <property type="entry name" value="GTP-bd"/>
</dbReference>
<dbReference type="InterPro" id="IPR005662">
    <property type="entry name" value="GTPase_Era-like"/>
</dbReference>
<dbReference type="InterPro" id="IPR015946">
    <property type="entry name" value="KH_dom-like_a/b"/>
</dbReference>
<dbReference type="InterPro" id="IPR004044">
    <property type="entry name" value="KH_dom_type_2"/>
</dbReference>
<dbReference type="InterPro" id="IPR009019">
    <property type="entry name" value="KH_sf_prok-type"/>
</dbReference>
<dbReference type="InterPro" id="IPR027417">
    <property type="entry name" value="P-loop_NTPase"/>
</dbReference>
<dbReference type="InterPro" id="IPR005225">
    <property type="entry name" value="Small_GTP-bd"/>
</dbReference>
<dbReference type="NCBIfam" id="TIGR00436">
    <property type="entry name" value="era"/>
    <property type="match status" value="1"/>
</dbReference>
<dbReference type="NCBIfam" id="NF000908">
    <property type="entry name" value="PRK00089.1"/>
    <property type="match status" value="1"/>
</dbReference>
<dbReference type="NCBIfam" id="TIGR00231">
    <property type="entry name" value="small_GTP"/>
    <property type="match status" value="1"/>
</dbReference>
<dbReference type="PANTHER" id="PTHR42698">
    <property type="entry name" value="GTPASE ERA"/>
    <property type="match status" value="1"/>
</dbReference>
<dbReference type="PANTHER" id="PTHR42698:SF1">
    <property type="entry name" value="GTPASE ERA, MITOCHONDRIAL"/>
    <property type="match status" value="1"/>
</dbReference>
<dbReference type="Pfam" id="PF07650">
    <property type="entry name" value="KH_2"/>
    <property type="match status" value="1"/>
</dbReference>
<dbReference type="Pfam" id="PF01926">
    <property type="entry name" value="MMR_HSR1"/>
    <property type="match status" value="1"/>
</dbReference>
<dbReference type="PRINTS" id="PR00326">
    <property type="entry name" value="GTP1OBG"/>
</dbReference>
<dbReference type="SUPFAM" id="SSF52540">
    <property type="entry name" value="P-loop containing nucleoside triphosphate hydrolases"/>
    <property type="match status" value="1"/>
</dbReference>
<dbReference type="SUPFAM" id="SSF54814">
    <property type="entry name" value="Prokaryotic type KH domain (KH-domain type II)"/>
    <property type="match status" value="1"/>
</dbReference>
<dbReference type="PROSITE" id="PS51713">
    <property type="entry name" value="G_ERA"/>
    <property type="match status" value="1"/>
</dbReference>
<sequence>MSNTPFRTGFVAVVGRPNVGKSTLTNALIGSKISIVSRKAQTTRHRIHGVLTREHEQFVFVDTPGFQTRHGGAMNRMMNRVVTQALAEVDVVVHVVEAGKWTDGDAKLLPLLPDARRTILVVSKIDAVKRRDELFAFVSKIVAQHPYDAVVPVSAVKSQQLDQLLDEIAARLPEGEPLFEEDTLTDRPMRFIAAELLREKIFRLVGDELPYGCTVVIEQWEETDKNLRVAACVVVERDSHRPILLGAGGVHMKRIATEARQDIAKLVDKPVHLEVYIKVRKGWSDRESALRDLGYE</sequence>
<proteinExistence type="inferred from homology"/>
<keyword id="KW-0997">Cell inner membrane</keyword>
<keyword id="KW-1003">Cell membrane</keyword>
<keyword id="KW-0963">Cytoplasm</keyword>
<keyword id="KW-0342">GTP-binding</keyword>
<keyword id="KW-0472">Membrane</keyword>
<keyword id="KW-0547">Nucleotide-binding</keyword>
<keyword id="KW-0690">Ribosome biogenesis</keyword>
<keyword id="KW-0694">RNA-binding</keyword>
<keyword id="KW-0699">rRNA-binding</keyword>
<comment type="function">
    <text evidence="1">An essential GTPase that binds both GDP and GTP, with rapid nucleotide exchange. Plays a role in 16S rRNA processing and 30S ribosomal subunit biogenesis and possibly also in cell cycle regulation and energy metabolism.</text>
</comment>
<comment type="subunit">
    <text evidence="1">Monomer.</text>
</comment>
<comment type="subcellular location">
    <subcellularLocation>
        <location>Cytoplasm</location>
    </subcellularLocation>
    <subcellularLocation>
        <location evidence="1">Cell inner membrane</location>
        <topology evidence="1">Peripheral membrane protein</topology>
    </subcellularLocation>
</comment>
<comment type="similarity">
    <text evidence="1 2">Belongs to the TRAFAC class TrmE-Era-EngA-EngB-Septin-like GTPase superfamily. Era GTPase family.</text>
</comment>
<feature type="chain" id="PRO_1000121305" description="GTPase Era">
    <location>
        <begin position="1"/>
        <end position="296"/>
    </location>
</feature>
<feature type="domain" description="Era-type G" evidence="2">
    <location>
        <begin position="7"/>
        <end position="174"/>
    </location>
</feature>
<feature type="domain" description="KH type-2" evidence="1">
    <location>
        <begin position="205"/>
        <end position="281"/>
    </location>
</feature>
<feature type="region of interest" description="G1" evidence="2">
    <location>
        <begin position="15"/>
        <end position="22"/>
    </location>
</feature>
<feature type="region of interest" description="G2" evidence="2">
    <location>
        <begin position="41"/>
        <end position="45"/>
    </location>
</feature>
<feature type="region of interest" description="G3" evidence="2">
    <location>
        <begin position="62"/>
        <end position="65"/>
    </location>
</feature>
<feature type="region of interest" description="G4" evidence="2">
    <location>
        <begin position="123"/>
        <end position="126"/>
    </location>
</feature>
<feature type="region of interest" description="G5" evidence="2">
    <location>
        <begin position="153"/>
        <end position="155"/>
    </location>
</feature>
<feature type="binding site" evidence="1">
    <location>
        <begin position="15"/>
        <end position="22"/>
    </location>
    <ligand>
        <name>GTP</name>
        <dbReference type="ChEBI" id="CHEBI:37565"/>
    </ligand>
</feature>
<feature type="binding site" evidence="1">
    <location>
        <begin position="62"/>
        <end position="66"/>
    </location>
    <ligand>
        <name>GTP</name>
        <dbReference type="ChEBI" id="CHEBI:37565"/>
    </ligand>
</feature>
<feature type="binding site" evidence="1">
    <location>
        <begin position="123"/>
        <end position="126"/>
    </location>
    <ligand>
        <name>GTP</name>
        <dbReference type="ChEBI" id="CHEBI:37565"/>
    </ligand>
</feature>
<evidence type="ECO:0000255" key="1">
    <source>
        <dbReference type="HAMAP-Rule" id="MF_00367"/>
    </source>
</evidence>
<evidence type="ECO:0000255" key="2">
    <source>
        <dbReference type="PROSITE-ProRule" id="PRU01050"/>
    </source>
</evidence>
<gene>
    <name evidence="1" type="primary">era</name>
    <name type="ordered locus">Bpet1765</name>
</gene>
<organism>
    <name type="scientific">Bordetella petrii (strain ATCC BAA-461 / DSM 12804 / CCUG 43448)</name>
    <dbReference type="NCBI Taxonomy" id="340100"/>
    <lineage>
        <taxon>Bacteria</taxon>
        <taxon>Pseudomonadati</taxon>
        <taxon>Pseudomonadota</taxon>
        <taxon>Betaproteobacteria</taxon>
        <taxon>Burkholderiales</taxon>
        <taxon>Alcaligenaceae</taxon>
        <taxon>Bordetella</taxon>
    </lineage>
</organism>